<organism>
    <name type="scientific">Leptospira biflexa serovar Patoc (strain Patoc 1 / ATCC 23582 / Paris)</name>
    <dbReference type="NCBI Taxonomy" id="456481"/>
    <lineage>
        <taxon>Bacteria</taxon>
        <taxon>Pseudomonadati</taxon>
        <taxon>Spirochaetota</taxon>
        <taxon>Spirochaetia</taxon>
        <taxon>Leptospirales</taxon>
        <taxon>Leptospiraceae</taxon>
        <taxon>Leptospira</taxon>
    </lineage>
</organism>
<keyword id="KW-0328">Glycosyltransferase</keyword>
<keyword id="KW-0479">Metal-binding</keyword>
<keyword id="KW-0671">Queuosine biosynthesis</keyword>
<keyword id="KW-1185">Reference proteome</keyword>
<keyword id="KW-0808">Transferase</keyword>
<keyword id="KW-0819">tRNA processing</keyword>
<keyword id="KW-0862">Zinc</keyword>
<reference key="1">
    <citation type="journal article" date="2008" name="PLoS ONE">
        <title>Genome sequence of the saprophyte Leptospira biflexa provides insights into the evolution of Leptospira and the pathogenesis of leptospirosis.</title>
        <authorList>
            <person name="Picardeau M."/>
            <person name="Bulach D.M."/>
            <person name="Bouchier C."/>
            <person name="Zuerner R.L."/>
            <person name="Zidane N."/>
            <person name="Wilson P.J."/>
            <person name="Creno S."/>
            <person name="Kuczek E.S."/>
            <person name="Bommezzadri S."/>
            <person name="Davis J.C."/>
            <person name="McGrath A."/>
            <person name="Johnson M.J."/>
            <person name="Boursaux-Eude C."/>
            <person name="Seemann T."/>
            <person name="Rouy Z."/>
            <person name="Coppel R.L."/>
            <person name="Rood J.I."/>
            <person name="Lajus A."/>
            <person name="Davies J.K."/>
            <person name="Medigue C."/>
            <person name="Adler B."/>
        </authorList>
    </citation>
    <scope>NUCLEOTIDE SEQUENCE [LARGE SCALE GENOMIC DNA]</scope>
    <source>
        <strain>Patoc 1 / ATCC 23582 / Paris</strain>
    </source>
</reference>
<name>TGT_LEPBP</name>
<protein>
    <recommendedName>
        <fullName evidence="1">Queuine tRNA-ribosyltransferase</fullName>
        <ecNumber evidence="1">2.4.2.29</ecNumber>
    </recommendedName>
    <alternativeName>
        <fullName evidence="1">Guanine insertion enzyme</fullName>
    </alternativeName>
    <alternativeName>
        <fullName evidence="1">tRNA-guanine transglycosylase</fullName>
    </alternativeName>
</protein>
<sequence>MSSIFKEGIYDTGSYARTGTLDLNGIQIQTPIFMPVGTRGSIKSLTSEDIDELGYNLILANTYHLYLKPGKEVFDHFQGLKNFMSYKKALLTDSGGFQVFSLASLFKFEDDGVRFQSHIDGSHHKFTPASVIDMQRSIGSDIMMVLDDCAPYGSDTKRLELALDRTHRWAKESFAYWMENPGGQNVFPIVQGGVNETLRLRSLETLQKIDFPGIAIGGLSVGEPRPEYIRILECMAPHLDKSRPRYLMGVGTVVDILEGVKNGIDMFDCVLPTRNARNGQVFTSKGKINLRNESHRLSDSPIDPQCECKVCKTYSLGYIRHLHKVKELTAFSLSTYHNLFFMQSFMEKMRKSIEIGNFQGFYDHWKNLFGS</sequence>
<proteinExistence type="inferred from homology"/>
<evidence type="ECO:0000255" key="1">
    <source>
        <dbReference type="HAMAP-Rule" id="MF_00168"/>
    </source>
</evidence>
<comment type="function">
    <text evidence="1">Catalyzes the base-exchange of a guanine (G) residue with the queuine precursor 7-aminomethyl-7-deazaguanine (PreQ1) at position 34 (anticodon wobble position) in tRNAs with GU(N) anticodons (tRNA-Asp, -Asn, -His and -Tyr). Catalysis occurs through a double-displacement mechanism. The nucleophile active site attacks the C1' of nucleotide 34 to detach the guanine base from the RNA, forming a covalent enzyme-RNA intermediate. The proton acceptor active site deprotonates the incoming PreQ1, allowing a nucleophilic attack on the C1' of the ribose to form the product. After dissociation, two additional enzymatic reactions on the tRNA convert PreQ1 to queuine (Q), resulting in the hypermodified nucleoside queuosine (7-(((4,5-cis-dihydroxy-2-cyclopenten-1-yl)amino)methyl)-7-deazaguanosine).</text>
</comment>
<comment type="catalytic activity">
    <reaction evidence="1">
        <text>7-aminomethyl-7-carbaguanine + guanosine(34) in tRNA = 7-aminomethyl-7-carbaguanosine(34) in tRNA + guanine</text>
        <dbReference type="Rhea" id="RHEA:24104"/>
        <dbReference type="Rhea" id="RHEA-COMP:10341"/>
        <dbReference type="Rhea" id="RHEA-COMP:10342"/>
        <dbReference type="ChEBI" id="CHEBI:16235"/>
        <dbReference type="ChEBI" id="CHEBI:58703"/>
        <dbReference type="ChEBI" id="CHEBI:74269"/>
        <dbReference type="ChEBI" id="CHEBI:82833"/>
        <dbReference type="EC" id="2.4.2.29"/>
    </reaction>
</comment>
<comment type="cofactor">
    <cofactor evidence="1">
        <name>Zn(2+)</name>
        <dbReference type="ChEBI" id="CHEBI:29105"/>
    </cofactor>
    <text evidence="1">Binds 1 zinc ion per subunit.</text>
</comment>
<comment type="pathway">
    <text evidence="1">tRNA modification; tRNA-queuosine biosynthesis.</text>
</comment>
<comment type="subunit">
    <text evidence="1">Homodimer. Within each dimer, one monomer is responsible for RNA recognition and catalysis, while the other monomer binds to the replacement base PreQ1.</text>
</comment>
<comment type="similarity">
    <text evidence="1">Belongs to the queuine tRNA-ribosyltransferase family.</text>
</comment>
<gene>
    <name evidence="1" type="primary">tgt</name>
    <name type="ordered locus">LEPBI_I2329</name>
</gene>
<feature type="chain" id="PRO_1000198013" description="Queuine tRNA-ribosyltransferase">
    <location>
        <begin position="1"/>
        <end position="371"/>
    </location>
</feature>
<feature type="region of interest" description="RNA binding" evidence="1">
    <location>
        <begin position="249"/>
        <end position="255"/>
    </location>
</feature>
<feature type="region of interest" description="RNA binding; important for wobble base 34 recognition" evidence="1">
    <location>
        <begin position="273"/>
        <end position="277"/>
    </location>
</feature>
<feature type="active site" description="Proton acceptor" evidence="1">
    <location>
        <position position="93"/>
    </location>
</feature>
<feature type="active site" description="Nucleophile" evidence="1">
    <location>
        <position position="268"/>
    </location>
</feature>
<feature type="binding site" evidence="1">
    <location>
        <begin position="93"/>
        <end position="97"/>
    </location>
    <ligand>
        <name>substrate</name>
    </ligand>
</feature>
<feature type="binding site" evidence="1">
    <location>
        <position position="147"/>
    </location>
    <ligand>
        <name>substrate</name>
    </ligand>
</feature>
<feature type="binding site" evidence="1">
    <location>
        <position position="191"/>
    </location>
    <ligand>
        <name>substrate</name>
    </ligand>
</feature>
<feature type="binding site" evidence="1">
    <location>
        <position position="218"/>
    </location>
    <ligand>
        <name>substrate</name>
    </ligand>
</feature>
<feature type="binding site" evidence="1">
    <location>
        <position position="306"/>
    </location>
    <ligand>
        <name>Zn(2+)</name>
        <dbReference type="ChEBI" id="CHEBI:29105"/>
    </ligand>
</feature>
<feature type="binding site" evidence="1">
    <location>
        <position position="308"/>
    </location>
    <ligand>
        <name>Zn(2+)</name>
        <dbReference type="ChEBI" id="CHEBI:29105"/>
    </ligand>
</feature>
<feature type="binding site" evidence="1">
    <location>
        <position position="311"/>
    </location>
    <ligand>
        <name>Zn(2+)</name>
        <dbReference type="ChEBI" id="CHEBI:29105"/>
    </ligand>
</feature>
<feature type="binding site" evidence="1">
    <location>
        <position position="337"/>
    </location>
    <ligand>
        <name>Zn(2+)</name>
        <dbReference type="ChEBI" id="CHEBI:29105"/>
    </ligand>
</feature>
<accession>B0SKS9</accession>
<dbReference type="EC" id="2.4.2.29" evidence="1"/>
<dbReference type="EMBL" id="CP000786">
    <property type="protein sequence ID" value="ABZ98422.1"/>
    <property type="molecule type" value="Genomic_DNA"/>
</dbReference>
<dbReference type="RefSeq" id="WP_012389286.1">
    <property type="nucleotide sequence ID" value="NC_010602.1"/>
</dbReference>
<dbReference type="SMR" id="B0SKS9"/>
<dbReference type="STRING" id="456481.LEPBI_I2329"/>
<dbReference type="KEGG" id="lbi:LEPBI_I2329"/>
<dbReference type="HOGENOM" id="CLU_022060_0_1_12"/>
<dbReference type="OrthoDB" id="9805417at2"/>
<dbReference type="BioCyc" id="LBIF456481:LEPBI_RS11510-MONOMER"/>
<dbReference type="UniPathway" id="UPA00392"/>
<dbReference type="Proteomes" id="UP000001847">
    <property type="component" value="Chromosome I"/>
</dbReference>
<dbReference type="GO" id="GO:0005829">
    <property type="term" value="C:cytosol"/>
    <property type="evidence" value="ECO:0007669"/>
    <property type="project" value="TreeGrafter"/>
</dbReference>
<dbReference type="GO" id="GO:0046872">
    <property type="term" value="F:metal ion binding"/>
    <property type="evidence" value="ECO:0007669"/>
    <property type="project" value="UniProtKB-KW"/>
</dbReference>
<dbReference type="GO" id="GO:0008479">
    <property type="term" value="F:tRNA-guanosine(34) queuine transglycosylase activity"/>
    <property type="evidence" value="ECO:0007669"/>
    <property type="project" value="UniProtKB-UniRule"/>
</dbReference>
<dbReference type="GO" id="GO:0008616">
    <property type="term" value="P:queuosine biosynthetic process"/>
    <property type="evidence" value="ECO:0007669"/>
    <property type="project" value="UniProtKB-UniRule"/>
</dbReference>
<dbReference type="GO" id="GO:0101030">
    <property type="term" value="P:tRNA-guanine transglycosylation"/>
    <property type="evidence" value="ECO:0007669"/>
    <property type="project" value="InterPro"/>
</dbReference>
<dbReference type="Gene3D" id="3.20.20.105">
    <property type="entry name" value="Queuine tRNA-ribosyltransferase-like"/>
    <property type="match status" value="1"/>
</dbReference>
<dbReference type="HAMAP" id="MF_00168">
    <property type="entry name" value="Q_tRNA_Tgt"/>
    <property type="match status" value="1"/>
</dbReference>
<dbReference type="InterPro" id="IPR004803">
    <property type="entry name" value="TGT"/>
</dbReference>
<dbReference type="InterPro" id="IPR036511">
    <property type="entry name" value="TGT-like_sf"/>
</dbReference>
<dbReference type="InterPro" id="IPR002616">
    <property type="entry name" value="tRNA_ribo_trans-like"/>
</dbReference>
<dbReference type="NCBIfam" id="TIGR00430">
    <property type="entry name" value="Q_tRNA_tgt"/>
    <property type="match status" value="1"/>
</dbReference>
<dbReference type="NCBIfam" id="TIGR00449">
    <property type="entry name" value="tgt_general"/>
    <property type="match status" value="1"/>
</dbReference>
<dbReference type="PANTHER" id="PTHR43530">
    <property type="entry name" value="QUEUINE TRNA-RIBOSYLTRANSFERASE CATALYTIC SUBUNIT 1"/>
    <property type="match status" value="1"/>
</dbReference>
<dbReference type="PANTHER" id="PTHR43530:SF1">
    <property type="entry name" value="QUEUINE TRNA-RIBOSYLTRANSFERASE CATALYTIC SUBUNIT 1"/>
    <property type="match status" value="1"/>
</dbReference>
<dbReference type="Pfam" id="PF01702">
    <property type="entry name" value="TGT"/>
    <property type="match status" value="1"/>
</dbReference>
<dbReference type="SUPFAM" id="SSF51713">
    <property type="entry name" value="tRNA-guanine transglycosylase"/>
    <property type="match status" value="1"/>
</dbReference>